<accession>A5GJ87</accession>
<comment type="function">
    <text evidence="1">Involved in DNA repair and RecF pathway recombination.</text>
</comment>
<comment type="similarity">
    <text evidence="1">Belongs to the RecO family.</text>
</comment>
<proteinExistence type="inferred from homology"/>
<organism>
    <name type="scientific">Synechococcus sp. (strain WH7803)</name>
    <dbReference type="NCBI Taxonomy" id="32051"/>
    <lineage>
        <taxon>Bacteria</taxon>
        <taxon>Bacillati</taxon>
        <taxon>Cyanobacteriota</taxon>
        <taxon>Cyanophyceae</taxon>
        <taxon>Synechococcales</taxon>
        <taxon>Synechococcaceae</taxon>
        <taxon>Synechococcus</taxon>
    </lineage>
</organism>
<reference key="1">
    <citation type="submission" date="2006-05" db="EMBL/GenBank/DDBJ databases">
        <authorList>
            <consortium name="Genoscope"/>
        </authorList>
    </citation>
    <scope>NUCLEOTIDE SEQUENCE [LARGE SCALE GENOMIC DNA]</scope>
    <source>
        <strain>WH7803</strain>
    </source>
</reference>
<name>RECO_SYNPW</name>
<evidence type="ECO:0000255" key="1">
    <source>
        <dbReference type="HAMAP-Rule" id="MF_00201"/>
    </source>
</evidence>
<feature type="chain" id="PRO_1000193428" description="DNA repair protein RecO">
    <location>
        <begin position="1"/>
        <end position="270"/>
    </location>
</feature>
<sequence length="270" mass="28974">MSGDRRLQGLALKVGPLGEHDRLLTLLSDDVGVVRLAVPGARRPRSSLAAAVPLTCLDLQVVGRRGLARVRQLRVLRSYSGLGQRLDTLASAQALAELAIALVSSDDPVPGLLEAVLIHLDRLERLSRTPGEEADLCLANVVQAGVHLLALGGYGLPLQACCRSGAALTPPIGQWEWRCSVLPEEGLALGALAGARLQLNPSELALLQRLPRPDLPRRSNGELLGPRPVWLKLLALLECWCRAHLPRPVRSLAMVRDCLSAAPLSDHEPT</sequence>
<dbReference type="EMBL" id="CT971583">
    <property type="protein sequence ID" value="CAK23002.1"/>
    <property type="molecule type" value="Genomic_DNA"/>
</dbReference>
<dbReference type="SMR" id="A5GJ87"/>
<dbReference type="STRING" id="32051.SynWH7803_0576"/>
<dbReference type="KEGG" id="syx:SynWH7803_0576"/>
<dbReference type="eggNOG" id="COG1381">
    <property type="taxonomic scope" value="Bacteria"/>
</dbReference>
<dbReference type="HOGENOM" id="CLU_066632_0_0_3"/>
<dbReference type="OrthoDB" id="9797083at2"/>
<dbReference type="Proteomes" id="UP000001566">
    <property type="component" value="Chromosome"/>
</dbReference>
<dbReference type="GO" id="GO:0043590">
    <property type="term" value="C:bacterial nucleoid"/>
    <property type="evidence" value="ECO:0007669"/>
    <property type="project" value="TreeGrafter"/>
</dbReference>
<dbReference type="GO" id="GO:0006310">
    <property type="term" value="P:DNA recombination"/>
    <property type="evidence" value="ECO:0007669"/>
    <property type="project" value="UniProtKB-UniRule"/>
</dbReference>
<dbReference type="GO" id="GO:0006302">
    <property type="term" value="P:double-strand break repair"/>
    <property type="evidence" value="ECO:0007669"/>
    <property type="project" value="TreeGrafter"/>
</dbReference>
<dbReference type="Gene3D" id="2.40.50.140">
    <property type="entry name" value="Nucleic acid-binding proteins"/>
    <property type="match status" value="1"/>
</dbReference>
<dbReference type="Gene3D" id="1.20.1440.120">
    <property type="entry name" value="Recombination protein O, C-terminal domain"/>
    <property type="match status" value="1"/>
</dbReference>
<dbReference type="HAMAP" id="MF_00201">
    <property type="entry name" value="RecO"/>
    <property type="match status" value="1"/>
</dbReference>
<dbReference type="InterPro" id="IPR037278">
    <property type="entry name" value="ARFGAP/RecO"/>
</dbReference>
<dbReference type="InterPro" id="IPR022572">
    <property type="entry name" value="DNA_rep/recomb_RecO_N"/>
</dbReference>
<dbReference type="InterPro" id="IPR012340">
    <property type="entry name" value="NA-bd_OB-fold"/>
</dbReference>
<dbReference type="InterPro" id="IPR003717">
    <property type="entry name" value="RecO"/>
</dbReference>
<dbReference type="InterPro" id="IPR042242">
    <property type="entry name" value="RecO_C"/>
</dbReference>
<dbReference type="NCBIfam" id="TIGR00613">
    <property type="entry name" value="reco"/>
    <property type="match status" value="1"/>
</dbReference>
<dbReference type="PANTHER" id="PTHR33991">
    <property type="entry name" value="DNA REPAIR PROTEIN RECO"/>
    <property type="match status" value="1"/>
</dbReference>
<dbReference type="PANTHER" id="PTHR33991:SF1">
    <property type="entry name" value="DNA REPAIR PROTEIN RECO"/>
    <property type="match status" value="1"/>
</dbReference>
<dbReference type="Pfam" id="PF02565">
    <property type="entry name" value="RecO_C"/>
    <property type="match status" value="1"/>
</dbReference>
<dbReference type="Pfam" id="PF11967">
    <property type="entry name" value="RecO_N"/>
    <property type="match status" value="1"/>
</dbReference>
<dbReference type="SUPFAM" id="SSF57863">
    <property type="entry name" value="ArfGap/RecO-like zinc finger"/>
    <property type="match status" value="1"/>
</dbReference>
<dbReference type="SUPFAM" id="SSF50249">
    <property type="entry name" value="Nucleic acid-binding proteins"/>
    <property type="match status" value="1"/>
</dbReference>
<protein>
    <recommendedName>
        <fullName evidence="1">DNA repair protein RecO</fullName>
    </recommendedName>
    <alternativeName>
        <fullName evidence="1">Recombination protein O</fullName>
    </alternativeName>
</protein>
<gene>
    <name evidence="1" type="primary">recO</name>
    <name type="ordered locus">SynWH7803_0576</name>
</gene>
<keyword id="KW-0227">DNA damage</keyword>
<keyword id="KW-0233">DNA recombination</keyword>
<keyword id="KW-0234">DNA repair</keyword>
<keyword id="KW-1185">Reference proteome</keyword>